<feature type="chain" id="PRO_1000131052" description="Putative pre-16S rRNA nuclease">
    <location>
        <begin position="1"/>
        <end position="145"/>
    </location>
</feature>
<comment type="function">
    <text evidence="1">Could be a nuclease involved in processing of the 5'-end of pre-16S rRNA.</text>
</comment>
<comment type="subcellular location">
    <subcellularLocation>
        <location evidence="1">Cytoplasm</location>
    </subcellularLocation>
</comment>
<comment type="similarity">
    <text evidence="1">Belongs to the YqgF nuclease family.</text>
</comment>
<name>YQGF_OPITP</name>
<sequence length="145" mass="15807">MRCLGIDYGTRRIGLAYGDELGVATPLPALVEADPAKRWQSLLATARQRRVTDLVVGHPLNMDDTAGPKAKEAEAVAARLRTELAGVDVHLVDERLTSYEAEATISKTQRRAVRASGVIDSRAATLILQDFLDQRFPPPLPHPAE</sequence>
<keyword id="KW-0963">Cytoplasm</keyword>
<keyword id="KW-0378">Hydrolase</keyword>
<keyword id="KW-0540">Nuclease</keyword>
<keyword id="KW-1185">Reference proteome</keyword>
<keyword id="KW-0690">Ribosome biogenesis</keyword>
<reference key="1">
    <citation type="journal article" date="2011" name="J. Bacteriol.">
        <title>Genome sequence of the verrucomicrobium Opitutus terrae PB90-1, an abundant inhabitant of rice paddy soil ecosystems.</title>
        <authorList>
            <person name="van Passel M.W."/>
            <person name="Kant R."/>
            <person name="Palva A."/>
            <person name="Copeland A."/>
            <person name="Lucas S."/>
            <person name="Lapidus A."/>
            <person name="Glavina del Rio T."/>
            <person name="Pitluck S."/>
            <person name="Goltsman E."/>
            <person name="Clum A."/>
            <person name="Sun H."/>
            <person name="Schmutz J."/>
            <person name="Larimer F.W."/>
            <person name="Land M.L."/>
            <person name="Hauser L."/>
            <person name="Kyrpides N."/>
            <person name="Mikhailova N."/>
            <person name="Richardson P.P."/>
            <person name="Janssen P.H."/>
            <person name="de Vos W.M."/>
            <person name="Smidt H."/>
        </authorList>
    </citation>
    <scope>NUCLEOTIDE SEQUENCE [LARGE SCALE GENOMIC DNA]</scope>
    <source>
        <strain>DSM 11246 / JCM 15787 / PB90-1</strain>
    </source>
</reference>
<gene>
    <name type="ordered locus">Oter_3530</name>
</gene>
<accession>B1ZVE0</accession>
<dbReference type="EC" id="3.1.-.-" evidence="1"/>
<dbReference type="EMBL" id="CP001032">
    <property type="protein sequence ID" value="ACB76807.1"/>
    <property type="molecule type" value="Genomic_DNA"/>
</dbReference>
<dbReference type="RefSeq" id="WP_012376336.1">
    <property type="nucleotide sequence ID" value="NC_010571.1"/>
</dbReference>
<dbReference type="SMR" id="B1ZVE0"/>
<dbReference type="STRING" id="452637.Oter_3530"/>
<dbReference type="KEGG" id="ote:Oter_3530"/>
<dbReference type="eggNOG" id="COG0816">
    <property type="taxonomic scope" value="Bacteria"/>
</dbReference>
<dbReference type="HOGENOM" id="CLU_098240_2_0_0"/>
<dbReference type="OrthoDB" id="9796140at2"/>
<dbReference type="Proteomes" id="UP000007013">
    <property type="component" value="Chromosome"/>
</dbReference>
<dbReference type="GO" id="GO:0005829">
    <property type="term" value="C:cytosol"/>
    <property type="evidence" value="ECO:0007669"/>
    <property type="project" value="TreeGrafter"/>
</dbReference>
<dbReference type="GO" id="GO:0004518">
    <property type="term" value="F:nuclease activity"/>
    <property type="evidence" value="ECO:0007669"/>
    <property type="project" value="UniProtKB-KW"/>
</dbReference>
<dbReference type="GO" id="GO:0000967">
    <property type="term" value="P:rRNA 5'-end processing"/>
    <property type="evidence" value="ECO:0007669"/>
    <property type="project" value="UniProtKB-UniRule"/>
</dbReference>
<dbReference type="CDD" id="cd16964">
    <property type="entry name" value="YqgF"/>
    <property type="match status" value="1"/>
</dbReference>
<dbReference type="Gene3D" id="3.30.420.140">
    <property type="entry name" value="YqgF/RNase H-like domain"/>
    <property type="match status" value="1"/>
</dbReference>
<dbReference type="HAMAP" id="MF_00651">
    <property type="entry name" value="Nuclease_YqgF"/>
    <property type="match status" value="1"/>
</dbReference>
<dbReference type="InterPro" id="IPR012337">
    <property type="entry name" value="RNaseH-like_sf"/>
</dbReference>
<dbReference type="InterPro" id="IPR005227">
    <property type="entry name" value="YqgF"/>
</dbReference>
<dbReference type="InterPro" id="IPR006641">
    <property type="entry name" value="YqgF/RNaseH-like_dom"/>
</dbReference>
<dbReference type="InterPro" id="IPR037027">
    <property type="entry name" value="YqgF/RNaseH-like_dom_sf"/>
</dbReference>
<dbReference type="NCBIfam" id="TIGR00250">
    <property type="entry name" value="RNAse_H_YqgF"/>
    <property type="match status" value="1"/>
</dbReference>
<dbReference type="PANTHER" id="PTHR33317">
    <property type="entry name" value="POLYNUCLEOTIDYL TRANSFERASE, RIBONUCLEASE H-LIKE SUPERFAMILY PROTEIN"/>
    <property type="match status" value="1"/>
</dbReference>
<dbReference type="PANTHER" id="PTHR33317:SF4">
    <property type="entry name" value="POLYNUCLEOTIDYL TRANSFERASE, RIBONUCLEASE H-LIKE SUPERFAMILY PROTEIN"/>
    <property type="match status" value="1"/>
</dbReference>
<dbReference type="Pfam" id="PF03652">
    <property type="entry name" value="RuvX"/>
    <property type="match status" value="1"/>
</dbReference>
<dbReference type="SMART" id="SM00732">
    <property type="entry name" value="YqgFc"/>
    <property type="match status" value="1"/>
</dbReference>
<dbReference type="SUPFAM" id="SSF53098">
    <property type="entry name" value="Ribonuclease H-like"/>
    <property type="match status" value="1"/>
</dbReference>
<proteinExistence type="inferred from homology"/>
<evidence type="ECO:0000255" key="1">
    <source>
        <dbReference type="HAMAP-Rule" id="MF_00651"/>
    </source>
</evidence>
<organism>
    <name type="scientific">Opitutus terrae (strain DSM 11246 / JCM 15787 / PB90-1)</name>
    <dbReference type="NCBI Taxonomy" id="452637"/>
    <lineage>
        <taxon>Bacteria</taxon>
        <taxon>Pseudomonadati</taxon>
        <taxon>Verrucomicrobiota</taxon>
        <taxon>Opitutia</taxon>
        <taxon>Opitutales</taxon>
        <taxon>Opitutaceae</taxon>
        <taxon>Opitutus</taxon>
    </lineage>
</organism>
<protein>
    <recommendedName>
        <fullName evidence="1">Putative pre-16S rRNA nuclease</fullName>
        <ecNumber evidence="1">3.1.-.-</ecNumber>
    </recommendedName>
</protein>